<dbReference type="EC" id="2.4.2.29" evidence="1"/>
<dbReference type="EMBL" id="FM178379">
    <property type="protein sequence ID" value="CAQ80119.1"/>
    <property type="molecule type" value="Genomic_DNA"/>
</dbReference>
<dbReference type="RefSeq" id="WP_012550922.1">
    <property type="nucleotide sequence ID" value="NC_011312.1"/>
</dbReference>
<dbReference type="SMR" id="B6EK65"/>
<dbReference type="KEGG" id="vsa:VSAL_I2435"/>
<dbReference type="eggNOG" id="COG0343">
    <property type="taxonomic scope" value="Bacteria"/>
</dbReference>
<dbReference type="HOGENOM" id="CLU_022060_0_1_6"/>
<dbReference type="UniPathway" id="UPA00392"/>
<dbReference type="Proteomes" id="UP000001730">
    <property type="component" value="Chromosome 1"/>
</dbReference>
<dbReference type="GO" id="GO:0005829">
    <property type="term" value="C:cytosol"/>
    <property type="evidence" value="ECO:0007669"/>
    <property type="project" value="TreeGrafter"/>
</dbReference>
<dbReference type="GO" id="GO:0046872">
    <property type="term" value="F:metal ion binding"/>
    <property type="evidence" value="ECO:0007669"/>
    <property type="project" value="UniProtKB-KW"/>
</dbReference>
<dbReference type="GO" id="GO:0008479">
    <property type="term" value="F:tRNA-guanosine(34) queuine transglycosylase activity"/>
    <property type="evidence" value="ECO:0007669"/>
    <property type="project" value="UniProtKB-UniRule"/>
</dbReference>
<dbReference type="GO" id="GO:0008616">
    <property type="term" value="P:queuosine biosynthetic process"/>
    <property type="evidence" value="ECO:0007669"/>
    <property type="project" value="UniProtKB-UniRule"/>
</dbReference>
<dbReference type="GO" id="GO:0002099">
    <property type="term" value="P:tRNA wobble guanine modification"/>
    <property type="evidence" value="ECO:0007669"/>
    <property type="project" value="TreeGrafter"/>
</dbReference>
<dbReference type="GO" id="GO:0101030">
    <property type="term" value="P:tRNA-guanine transglycosylation"/>
    <property type="evidence" value="ECO:0007669"/>
    <property type="project" value="InterPro"/>
</dbReference>
<dbReference type="FunFam" id="3.20.20.105:FF:000001">
    <property type="entry name" value="Queuine tRNA-ribosyltransferase"/>
    <property type="match status" value="1"/>
</dbReference>
<dbReference type="Gene3D" id="3.20.20.105">
    <property type="entry name" value="Queuine tRNA-ribosyltransferase-like"/>
    <property type="match status" value="1"/>
</dbReference>
<dbReference type="HAMAP" id="MF_00168">
    <property type="entry name" value="Q_tRNA_Tgt"/>
    <property type="match status" value="1"/>
</dbReference>
<dbReference type="InterPro" id="IPR050076">
    <property type="entry name" value="ArchSynthase1/Queuine_TRR"/>
</dbReference>
<dbReference type="InterPro" id="IPR004803">
    <property type="entry name" value="TGT"/>
</dbReference>
<dbReference type="InterPro" id="IPR036511">
    <property type="entry name" value="TGT-like_sf"/>
</dbReference>
<dbReference type="InterPro" id="IPR002616">
    <property type="entry name" value="tRNA_ribo_trans-like"/>
</dbReference>
<dbReference type="NCBIfam" id="TIGR00430">
    <property type="entry name" value="Q_tRNA_tgt"/>
    <property type="match status" value="1"/>
</dbReference>
<dbReference type="NCBIfam" id="TIGR00449">
    <property type="entry name" value="tgt_general"/>
    <property type="match status" value="1"/>
</dbReference>
<dbReference type="PANTHER" id="PTHR46499">
    <property type="entry name" value="QUEUINE TRNA-RIBOSYLTRANSFERASE"/>
    <property type="match status" value="1"/>
</dbReference>
<dbReference type="PANTHER" id="PTHR46499:SF1">
    <property type="entry name" value="QUEUINE TRNA-RIBOSYLTRANSFERASE"/>
    <property type="match status" value="1"/>
</dbReference>
<dbReference type="Pfam" id="PF01702">
    <property type="entry name" value="TGT"/>
    <property type="match status" value="1"/>
</dbReference>
<dbReference type="SUPFAM" id="SSF51713">
    <property type="entry name" value="tRNA-guanine transglycosylase"/>
    <property type="match status" value="1"/>
</dbReference>
<protein>
    <recommendedName>
        <fullName evidence="1">Queuine tRNA-ribosyltransferase</fullName>
        <ecNumber evidence="1">2.4.2.29</ecNumber>
    </recommendedName>
    <alternativeName>
        <fullName evidence="1">Guanine insertion enzyme</fullName>
    </alternativeName>
    <alternativeName>
        <fullName evidence="1">tRNA-guanine transglycosylase</fullName>
    </alternativeName>
</protein>
<feature type="chain" id="PRO_1000097529" description="Queuine tRNA-ribosyltransferase">
    <location>
        <begin position="1"/>
        <end position="375"/>
    </location>
</feature>
<feature type="region of interest" description="RNA binding" evidence="1">
    <location>
        <begin position="245"/>
        <end position="251"/>
    </location>
</feature>
<feature type="region of interest" description="RNA binding; important for wobble base 34 recognition" evidence="1">
    <location>
        <begin position="269"/>
        <end position="273"/>
    </location>
</feature>
<feature type="active site" description="Proton acceptor" evidence="1">
    <location>
        <position position="89"/>
    </location>
</feature>
<feature type="active site" description="Nucleophile" evidence="1">
    <location>
        <position position="264"/>
    </location>
</feature>
<feature type="binding site" evidence="1">
    <location>
        <begin position="89"/>
        <end position="93"/>
    </location>
    <ligand>
        <name>substrate</name>
    </ligand>
</feature>
<feature type="binding site" evidence="1">
    <location>
        <position position="143"/>
    </location>
    <ligand>
        <name>substrate</name>
    </ligand>
</feature>
<feature type="binding site" evidence="1">
    <location>
        <position position="187"/>
    </location>
    <ligand>
        <name>substrate</name>
    </ligand>
</feature>
<feature type="binding site" evidence="1">
    <location>
        <position position="214"/>
    </location>
    <ligand>
        <name>substrate</name>
    </ligand>
</feature>
<feature type="binding site" evidence="1">
    <location>
        <position position="302"/>
    </location>
    <ligand>
        <name>Zn(2+)</name>
        <dbReference type="ChEBI" id="CHEBI:29105"/>
    </ligand>
</feature>
<feature type="binding site" evidence="1">
    <location>
        <position position="304"/>
    </location>
    <ligand>
        <name>Zn(2+)</name>
        <dbReference type="ChEBI" id="CHEBI:29105"/>
    </ligand>
</feature>
<feature type="binding site" evidence="1">
    <location>
        <position position="307"/>
    </location>
    <ligand>
        <name>Zn(2+)</name>
        <dbReference type="ChEBI" id="CHEBI:29105"/>
    </ligand>
</feature>
<feature type="binding site" evidence="1">
    <location>
        <position position="333"/>
    </location>
    <ligand>
        <name>Zn(2+)</name>
        <dbReference type="ChEBI" id="CHEBI:29105"/>
    </ligand>
</feature>
<accession>B6EK65</accession>
<comment type="function">
    <text evidence="1">Catalyzes the base-exchange of a guanine (G) residue with the queuine precursor 7-aminomethyl-7-deazaguanine (PreQ1) at position 34 (anticodon wobble position) in tRNAs with GU(N) anticodons (tRNA-Asp, -Asn, -His and -Tyr). Catalysis occurs through a double-displacement mechanism. The nucleophile active site attacks the C1' of nucleotide 34 to detach the guanine base from the RNA, forming a covalent enzyme-RNA intermediate. The proton acceptor active site deprotonates the incoming PreQ1, allowing a nucleophilic attack on the C1' of the ribose to form the product. After dissociation, two additional enzymatic reactions on the tRNA convert PreQ1 to queuine (Q), resulting in the hypermodified nucleoside queuosine (7-(((4,5-cis-dihydroxy-2-cyclopenten-1-yl)amino)methyl)-7-deazaguanosine).</text>
</comment>
<comment type="catalytic activity">
    <reaction evidence="1">
        <text>7-aminomethyl-7-carbaguanine + guanosine(34) in tRNA = 7-aminomethyl-7-carbaguanosine(34) in tRNA + guanine</text>
        <dbReference type="Rhea" id="RHEA:24104"/>
        <dbReference type="Rhea" id="RHEA-COMP:10341"/>
        <dbReference type="Rhea" id="RHEA-COMP:10342"/>
        <dbReference type="ChEBI" id="CHEBI:16235"/>
        <dbReference type="ChEBI" id="CHEBI:58703"/>
        <dbReference type="ChEBI" id="CHEBI:74269"/>
        <dbReference type="ChEBI" id="CHEBI:82833"/>
        <dbReference type="EC" id="2.4.2.29"/>
    </reaction>
</comment>
<comment type="cofactor">
    <cofactor evidence="1">
        <name>Zn(2+)</name>
        <dbReference type="ChEBI" id="CHEBI:29105"/>
    </cofactor>
    <text evidence="1">Binds 1 zinc ion per subunit.</text>
</comment>
<comment type="pathway">
    <text evidence="1">tRNA modification; tRNA-queuosine biosynthesis.</text>
</comment>
<comment type="subunit">
    <text evidence="1">Homodimer. Within each dimer, one monomer is responsible for RNA recognition and catalysis, while the other monomer binds to the replacement base PreQ1.</text>
</comment>
<comment type="similarity">
    <text evidence="1">Belongs to the queuine tRNA-ribosyltransferase family.</text>
</comment>
<gene>
    <name evidence="1" type="primary">tgt</name>
    <name type="ordered locus">VSAL_I2435</name>
</gene>
<name>TGT_ALISL</name>
<reference key="1">
    <citation type="journal article" date="2008" name="BMC Genomics">
        <title>The genome sequence of the fish pathogen Aliivibrio salmonicida strain LFI1238 shows extensive evidence of gene decay.</title>
        <authorList>
            <person name="Hjerde E."/>
            <person name="Lorentzen M.S."/>
            <person name="Holden M.T."/>
            <person name="Seeger K."/>
            <person name="Paulsen S."/>
            <person name="Bason N."/>
            <person name="Churcher C."/>
            <person name="Harris D."/>
            <person name="Norbertczak H."/>
            <person name="Quail M.A."/>
            <person name="Sanders S."/>
            <person name="Thurston S."/>
            <person name="Parkhill J."/>
            <person name="Willassen N.P."/>
            <person name="Thomson N.R."/>
        </authorList>
    </citation>
    <scope>NUCLEOTIDE SEQUENCE [LARGE SCALE GENOMIC DNA]</scope>
    <source>
        <strain>LFI1238</strain>
    </source>
</reference>
<sequence length="375" mass="42939">MKYELIKKQGRARRGQLQFDRGTVETPAFMPVGTYGTVKGMTPEEVKDTGAEILLGNTFHLWLRPGQEIMKLHGDLHDFMNWKGPILTDSGGFQVFSLGKTRKITEEGVHFRSPVNGDKIFMDAEKSMQIQYDLGSDVVMIFDECTPYPATHDEARISMERSIRWADRSRNEFDRQENPNALFGIVQGGVYEDLRDVSVEALTKIGFDGYAVGGLAVGEPKEDMHRILEHTCPLLPEDKPRYLMGVGKPEDLVEGVRRGIDMFDCVMPTRNARNGHLFVTGGIVKIRNAKHKVDTTPLDPECDCYTCQNYSKSYLHHLDRCNEILGARLNTIHNLRYYQRIMASIRKALEEDRFEQFVEEFYARRDREVPPLKDL</sequence>
<evidence type="ECO:0000255" key="1">
    <source>
        <dbReference type="HAMAP-Rule" id="MF_00168"/>
    </source>
</evidence>
<proteinExistence type="inferred from homology"/>
<keyword id="KW-0328">Glycosyltransferase</keyword>
<keyword id="KW-0479">Metal-binding</keyword>
<keyword id="KW-0671">Queuosine biosynthesis</keyword>
<keyword id="KW-0808">Transferase</keyword>
<keyword id="KW-0819">tRNA processing</keyword>
<keyword id="KW-0862">Zinc</keyword>
<organism>
    <name type="scientific">Aliivibrio salmonicida (strain LFI1238)</name>
    <name type="common">Vibrio salmonicida (strain LFI1238)</name>
    <dbReference type="NCBI Taxonomy" id="316275"/>
    <lineage>
        <taxon>Bacteria</taxon>
        <taxon>Pseudomonadati</taxon>
        <taxon>Pseudomonadota</taxon>
        <taxon>Gammaproteobacteria</taxon>
        <taxon>Vibrionales</taxon>
        <taxon>Vibrionaceae</taxon>
        <taxon>Aliivibrio</taxon>
    </lineage>
</organism>